<dbReference type="EC" id="2.4.1.56" evidence="2"/>
<dbReference type="EMBL" id="M73826">
    <property type="protein sequence ID" value="AAA27207.1"/>
    <property type="molecule type" value="Genomic_DNA"/>
</dbReference>
<dbReference type="EMBL" id="AE006468">
    <property type="protein sequence ID" value="AAL22573.1"/>
    <property type="molecule type" value="Genomic_DNA"/>
</dbReference>
<dbReference type="PIR" id="C41317">
    <property type="entry name" value="C41317"/>
</dbReference>
<dbReference type="RefSeq" id="NP_462614.1">
    <property type="nucleotide sequence ID" value="NC_003197.2"/>
</dbReference>
<dbReference type="RefSeq" id="WP_000591818.1">
    <property type="nucleotide sequence ID" value="NC_003197.2"/>
</dbReference>
<dbReference type="SMR" id="P26470"/>
<dbReference type="STRING" id="99287.STM3714"/>
<dbReference type="CAZy" id="GT4">
    <property type="family name" value="Glycosyltransferase Family 4"/>
</dbReference>
<dbReference type="PaxDb" id="99287-STM3714"/>
<dbReference type="DNASU" id="1255238"/>
<dbReference type="GeneID" id="1255238"/>
<dbReference type="KEGG" id="stm:STM3714"/>
<dbReference type="PATRIC" id="fig|99287.12.peg.3928"/>
<dbReference type="HOGENOM" id="CLU_009583_38_1_6"/>
<dbReference type="OMA" id="SVHNEMF"/>
<dbReference type="PhylomeDB" id="P26470"/>
<dbReference type="BioCyc" id="MetaCyc:STM3714-MONOMER"/>
<dbReference type="BioCyc" id="SENT99287:STM3714-MONOMER"/>
<dbReference type="UniPathway" id="UPA00958"/>
<dbReference type="Proteomes" id="UP000001014">
    <property type="component" value="Chromosome"/>
</dbReference>
<dbReference type="GO" id="GO:0005886">
    <property type="term" value="C:plasma membrane"/>
    <property type="evidence" value="ECO:0007669"/>
    <property type="project" value="UniProtKB-SubCell"/>
</dbReference>
<dbReference type="GO" id="GO:0008917">
    <property type="term" value="F:lipopolysaccharide N-acetylglucosaminyltransferase activity"/>
    <property type="evidence" value="ECO:0007669"/>
    <property type="project" value="UniProtKB-EC"/>
</dbReference>
<dbReference type="GO" id="GO:0009244">
    <property type="term" value="P:lipopolysaccharide core region biosynthetic process"/>
    <property type="evidence" value="ECO:0007669"/>
    <property type="project" value="UniProtKB-UniPathway"/>
</dbReference>
<dbReference type="CDD" id="cd03801">
    <property type="entry name" value="GT4_PimA-like"/>
    <property type="match status" value="1"/>
</dbReference>
<dbReference type="Gene3D" id="3.40.50.2000">
    <property type="entry name" value="Glycogen Phosphorylase B"/>
    <property type="match status" value="1"/>
</dbReference>
<dbReference type="InterPro" id="IPR001296">
    <property type="entry name" value="Glyco_trans_1"/>
</dbReference>
<dbReference type="NCBIfam" id="NF012028">
    <property type="entry name" value="PRK15484.1"/>
    <property type="match status" value="1"/>
</dbReference>
<dbReference type="PANTHER" id="PTHR12526">
    <property type="entry name" value="GLYCOSYLTRANSFERASE"/>
    <property type="match status" value="1"/>
</dbReference>
<dbReference type="PANTHER" id="PTHR12526:SF637">
    <property type="entry name" value="GLYCOSYLTRANSFERASE EPSF-RELATED"/>
    <property type="match status" value="1"/>
</dbReference>
<dbReference type="Pfam" id="PF00534">
    <property type="entry name" value="Glycos_transf_1"/>
    <property type="match status" value="1"/>
</dbReference>
<dbReference type="SUPFAM" id="SSF53756">
    <property type="entry name" value="UDP-Glycosyltransferase/glycogen phosphorylase"/>
    <property type="match status" value="1"/>
</dbReference>
<name>WAAK_SALTY</name>
<gene>
    <name evidence="4" type="primary">waaK</name>
    <name evidence="3" type="synonym">rfaK</name>
    <name type="ordered locus">STM3714</name>
</gene>
<comment type="function">
    <text evidence="2">Transferase involved in the biosynthesis of the core oligosaccharide region of lipopolysaccharide (LPS) (PubMed:24479701). Catalyzes the addition of the terminal N-acetyl-D-glucosamine (GlcNAc) group to the outer-core glucose II, the last step of the lipid A-core oligosaccharide biosynthesis (PubMed:24479701).</text>
</comment>
<comment type="catalytic activity">
    <reaction evidence="2">
        <text>UDP-N-acetyl-alpha-D-glucosamine + [lipopolysaccharide] = UDP + N-acetyl-alpha-D-glucosaminyl-[lipopolysaccharide].</text>
        <dbReference type="EC" id="2.4.1.56"/>
    </reaction>
</comment>
<comment type="pathway">
    <text evidence="2 6">Bacterial outer membrane biogenesis; LPS core biosynthesis.</text>
</comment>
<comment type="subcellular location">
    <subcellularLocation>
        <location evidence="6">Cell inner membrane</location>
        <topology evidence="6">Peripheral membrane protein</topology>
    </subcellularLocation>
</comment>
<comment type="disruption phenotype">
    <text evidence="1">Mutant lacks a terminal outer core GlcNAc residue and does not express the O antigen, but it can invade epithelial cells as efficiently as the wild-type strain.</text>
</comment>
<comment type="similarity">
    <text evidence="5">Belongs to the glycosyltransferase group 1 family. Glycosyltransferase 4 subfamily.</text>
</comment>
<organism>
    <name type="scientific">Salmonella typhimurium (strain LT2 / SGSC1412 / ATCC 700720)</name>
    <dbReference type="NCBI Taxonomy" id="99287"/>
    <lineage>
        <taxon>Bacteria</taxon>
        <taxon>Pseudomonadati</taxon>
        <taxon>Pseudomonadota</taxon>
        <taxon>Gammaproteobacteria</taxon>
        <taxon>Enterobacterales</taxon>
        <taxon>Enterobacteriaceae</taxon>
        <taxon>Salmonella</taxon>
    </lineage>
</organism>
<sequence>MIKKIIFTVTPIFSIPPRGAAAVETWIYQVAKRLSIPNAIACIKNAGYPEYNKINDNCDIHYIGFSKVYKRLFQKWTRLDPLPYSQRILNIRDKVTTQEDSVIVIHNSMKLYRQIRERNPNAKLVMHMHNAFEPELPDNDAKIIVPSQFLKAFYEERLPAAAVSIVPNGFCAETYKRNPQDNLRQQLNIAEDATVLLYAGRISPDKGILLLLQAFKQLRTLRSNIKLVVVGDPYASRKGEKAEYQKKVLDAAKEIGTDCIMAGGQSPDQMHNFYHIADLVIVPSQVEEAFCMVAVEAMAAGKAVLASKKGGISEFVLDGITGYHLAEPMSSDSIINDINRALADKERHQIAEKAKSLVFSKYSWENVAQRFEEQMKNWFDK</sequence>
<accession>P26470</accession>
<protein>
    <recommendedName>
        <fullName evidence="5">Lipopolysaccharide 1,2-N-acetylglucosaminetransferase</fullName>
        <ecNumber evidence="2">2.4.1.56</ecNumber>
    </recommendedName>
</protein>
<evidence type="ECO:0000269" key="1">
    <source>
    </source>
</evidence>
<evidence type="ECO:0000269" key="2">
    <source>
    </source>
</evidence>
<evidence type="ECO:0000303" key="3">
    <source>
    </source>
</evidence>
<evidence type="ECO:0000303" key="4">
    <source>
    </source>
</evidence>
<evidence type="ECO:0000305" key="5"/>
<evidence type="ECO:0000305" key="6">
    <source>
    </source>
</evidence>
<feature type="chain" id="PRO_0000080306" description="Lipopolysaccharide 1,2-N-acetylglucosaminetransferase">
    <location>
        <begin position="1"/>
        <end position="381"/>
    </location>
</feature>
<keyword id="KW-0997">Cell inner membrane</keyword>
<keyword id="KW-1003">Cell membrane</keyword>
<keyword id="KW-0328">Glycosyltransferase</keyword>
<keyword id="KW-0448">Lipopolysaccharide biosynthesis</keyword>
<keyword id="KW-0472">Membrane</keyword>
<keyword id="KW-1185">Reference proteome</keyword>
<keyword id="KW-0808">Transferase</keyword>
<reference key="1">
    <citation type="journal article" date="1991" name="J. Bacteriol.">
        <title>Cloning, characterization, and DNA sequence of the rfaLK region for lipopolysaccharide synthesis in Salmonella typhimurium LT2.</title>
        <authorList>
            <person name="Maclachlan P.R."/>
            <person name="Kadam S.K."/>
            <person name="Sanderson K.E."/>
        </authorList>
    </citation>
    <scope>NUCLEOTIDE SEQUENCE [GENOMIC DNA]</scope>
    <source>
        <strain>LT2</strain>
    </source>
</reference>
<reference key="2">
    <citation type="journal article" date="2001" name="Nature">
        <title>Complete genome sequence of Salmonella enterica serovar Typhimurium LT2.</title>
        <authorList>
            <person name="McClelland M."/>
            <person name="Sanderson K.E."/>
            <person name="Spieth J."/>
            <person name="Clifton S.W."/>
            <person name="Latreille P."/>
            <person name="Courtney L."/>
            <person name="Porwollik S."/>
            <person name="Ali J."/>
            <person name="Dante M."/>
            <person name="Du F."/>
            <person name="Hou S."/>
            <person name="Layman D."/>
            <person name="Leonard S."/>
            <person name="Nguyen C."/>
            <person name="Scott K."/>
            <person name="Holmes A."/>
            <person name="Grewal N."/>
            <person name="Mulvaney E."/>
            <person name="Ryan E."/>
            <person name="Sun H."/>
            <person name="Florea L."/>
            <person name="Miller W."/>
            <person name="Stoneking T."/>
            <person name="Nhan M."/>
            <person name="Waterston R."/>
            <person name="Wilson R.K."/>
        </authorList>
    </citation>
    <scope>NUCLEOTIDE SEQUENCE [LARGE SCALE GENOMIC DNA]</scope>
    <source>
        <strain>LT2 / SGSC1412 / ATCC 700720</strain>
    </source>
</reference>
<reference key="3">
    <citation type="journal article" date="2006" name="Infect. Immun.">
        <title>The outer core lipopolysaccharide of Salmonella enterica serovar Typhi is required for bacterial entry into epithelial cells.</title>
        <authorList>
            <person name="Hoare A."/>
            <person name="Bittner M."/>
            <person name="Carter J."/>
            <person name="Alvarez S."/>
            <person name="Zaldivar M."/>
            <person name="Bravo D."/>
            <person name="Valvano M.A."/>
            <person name="Contreras I."/>
        </authorList>
    </citation>
    <scope>DISRUPTION PHENOTYPE</scope>
    <source>
        <strain>Ty2</strain>
    </source>
</reference>
<reference key="4">
    <citation type="journal article" date="2014" name="Biochemistry">
        <title>In vitro assembly of the outer core of the lipopolysaccharide from Escherichia coli K-12 and Salmonella typhimurium.</title>
        <authorList>
            <person name="Qian J."/>
            <person name="Garrett T.A."/>
            <person name="Raetz C.R."/>
        </authorList>
    </citation>
    <scope>FUNCTION</scope>
    <scope>CATALYTIC ACTIVITY</scope>
    <scope>PATHWAY</scope>
    <source>
        <strain>LT2</strain>
    </source>
</reference>
<proteinExistence type="evidence at protein level"/>